<keyword id="KW-0002">3D-structure</keyword>
<keyword id="KW-0121">Carboxypeptidase</keyword>
<keyword id="KW-1015">Disulfide bond</keyword>
<keyword id="KW-0378">Hydrolase</keyword>
<keyword id="KW-0479">Metal-binding</keyword>
<keyword id="KW-0482">Metalloprotease</keyword>
<keyword id="KW-0645">Protease</keyword>
<keyword id="KW-0964">Secreted</keyword>
<keyword id="KW-0732">Signal</keyword>
<keyword id="KW-0862">Zinc</keyword>
<dbReference type="EC" id="3.4.17.2" evidence="4"/>
<dbReference type="EMBL" id="AM085495">
    <property type="protein sequence ID" value="CAJ30028.1"/>
    <property type="molecule type" value="mRNA"/>
</dbReference>
<dbReference type="PDB" id="2C1C">
    <property type="method" value="X-ray"/>
    <property type="resolution" value="2.30 A"/>
    <property type="chains" value="A/B=117-428"/>
</dbReference>
<dbReference type="PDBsum" id="2C1C"/>
<dbReference type="SMR" id="Q3T905"/>
<dbReference type="BindingDB" id="Q3T905"/>
<dbReference type="ChEMBL" id="CHEMBL6098"/>
<dbReference type="MEROPS" id="M14.032"/>
<dbReference type="EnsemblMetazoa" id="XM_047171607.1">
    <property type="protein sequence ID" value="XP_047027563.1"/>
    <property type="gene ID" value="LOC124635665"/>
</dbReference>
<dbReference type="BRENDA" id="3.4.17.2">
    <property type="organism ID" value="2610"/>
</dbReference>
<dbReference type="EvolutionaryTrace" id="Q3T905"/>
<dbReference type="GO" id="GO:0005615">
    <property type="term" value="C:extracellular space"/>
    <property type="evidence" value="ECO:0007669"/>
    <property type="project" value="TreeGrafter"/>
</dbReference>
<dbReference type="GO" id="GO:0004181">
    <property type="term" value="F:metallocarboxypeptidase activity"/>
    <property type="evidence" value="ECO:0000314"/>
    <property type="project" value="UniProtKB"/>
</dbReference>
<dbReference type="GO" id="GO:0008270">
    <property type="term" value="F:zinc ion binding"/>
    <property type="evidence" value="ECO:0000314"/>
    <property type="project" value="UniProtKB"/>
</dbReference>
<dbReference type="GO" id="GO:0006508">
    <property type="term" value="P:proteolysis"/>
    <property type="evidence" value="ECO:0000314"/>
    <property type="project" value="UniProtKB"/>
</dbReference>
<dbReference type="CDD" id="cd06248">
    <property type="entry name" value="M14_CP_insect"/>
    <property type="match status" value="1"/>
</dbReference>
<dbReference type="FunFam" id="3.40.630.10:FF:000084">
    <property type="entry name" value="Carboxypeptidase B2"/>
    <property type="match status" value="1"/>
</dbReference>
<dbReference type="Gene3D" id="3.30.70.340">
    <property type="entry name" value="Metallocarboxypeptidase-like"/>
    <property type="match status" value="1"/>
</dbReference>
<dbReference type="Gene3D" id="3.40.630.10">
    <property type="entry name" value="Zn peptidases"/>
    <property type="match status" value="1"/>
</dbReference>
<dbReference type="InterPro" id="IPR036990">
    <property type="entry name" value="M14A-like_propep"/>
</dbReference>
<dbReference type="InterPro" id="IPR003146">
    <property type="entry name" value="M14A_act_pep"/>
</dbReference>
<dbReference type="InterPro" id="IPR000834">
    <property type="entry name" value="Peptidase_M14"/>
</dbReference>
<dbReference type="PANTHER" id="PTHR11705:SF140">
    <property type="entry name" value="FI02848P-RELATED"/>
    <property type="match status" value="1"/>
</dbReference>
<dbReference type="PANTHER" id="PTHR11705">
    <property type="entry name" value="PROTEASE FAMILY M14 CARBOXYPEPTIDASE A,B"/>
    <property type="match status" value="1"/>
</dbReference>
<dbReference type="Pfam" id="PF00246">
    <property type="entry name" value="Peptidase_M14"/>
    <property type="match status" value="1"/>
</dbReference>
<dbReference type="Pfam" id="PF02244">
    <property type="entry name" value="Propep_M14"/>
    <property type="match status" value="1"/>
</dbReference>
<dbReference type="PRINTS" id="PR00765">
    <property type="entry name" value="CRBOXYPTASEA"/>
</dbReference>
<dbReference type="SMART" id="SM00631">
    <property type="entry name" value="Zn_pept"/>
    <property type="match status" value="1"/>
</dbReference>
<dbReference type="SUPFAM" id="SSF54897">
    <property type="entry name" value="Protease propeptides/inhibitors"/>
    <property type="match status" value="1"/>
</dbReference>
<dbReference type="SUPFAM" id="SSF53187">
    <property type="entry name" value="Zn-dependent exopeptidases"/>
    <property type="match status" value="1"/>
</dbReference>
<dbReference type="PROSITE" id="PS00132">
    <property type="entry name" value="CARBOXYPEPT_ZN_1"/>
    <property type="match status" value="1"/>
</dbReference>
<dbReference type="PROSITE" id="PS52035">
    <property type="entry name" value="PEPTIDASE_M14"/>
    <property type="match status" value="1"/>
</dbReference>
<feature type="signal peptide" evidence="2">
    <location>
        <begin position="1"/>
        <end position="15"/>
    </location>
</feature>
<feature type="chain" id="PRO_5012587721" description="Carboxypeptidase B">
    <location>
        <begin position="16"/>
        <end position="429"/>
    </location>
</feature>
<feature type="domain" description="Peptidase M14" evidence="3">
    <location>
        <begin position="121"/>
        <end position="423"/>
    </location>
</feature>
<feature type="active site" description="Proton donor/acceptor" evidence="3">
    <location>
        <position position="387"/>
    </location>
</feature>
<feature type="binding site" evidence="1">
    <location>
        <begin position="182"/>
        <end position="185"/>
    </location>
    <ligand>
        <name>substrate</name>
    </ligand>
</feature>
<feature type="binding site" evidence="3 4 9">
    <location>
        <position position="182"/>
    </location>
    <ligand>
        <name>Zn(2+)</name>
        <dbReference type="ChEBI" id="CHEBI:29105"/>
        <note>catalytic</note>
    </ligand>
</feature>
<feature type="binding site" evidence="3 4 9">
    <location>
        <position position="185"/>
    </location>
    <ligand>
        <name>Zn(2+)</name>
        <dbReference type="ChEBI" id="CHEBI:29105"/>
        <note>catalytic</note>
    </ligand>
</feature>
<feature type="binding site" evidence="1">
    <location>
        <position position="236"/>
    </location>
    <ligand>
        <name>substrate</name>
    </ligand>
</feature>
<feature type="binding site" evidence="1">
    <location>
        <begin position="256"/>
        <end position="257"/>
    </location>
    <ligand>
        <name>substrate</name>
    </ligand>
</feature>
<feature type="binding site" evidence="3 4 9">
    <location>
        <position position="309"/>
    </location>
    <ligand>
        <name>Zn(2+)</name>
        <dbReference type="ChEBI" id="CHEBI:29105"/>
        <note>catalytic</note>
    </ligand>
</feature>
<feature type="binding site" evidence="1">
    <location>
        <begin position="310"/>
        <end position="311"/>
    </location>
    <ligand>
        <name>substrate</name>
    </ligand>
</feature>
<feature type="binding site" evidence="1">
    <location>
        <position position="365"/>
    </location>
    <ligand>
        <name>substrate</name>
    </ligand>
</feature>
<feature type="disulfide bond" evidence="4 9">
    <location>
        <begin position="250"/>
        <end position="273"/>
    </location>
</feature>
<feature type="helix" evidence="10">
    <location>
        <begin position="125"/>
        <end position="138"/>
    </location>
</feature>
<feature type="turn" evidence="10">
    <location>
        <begin position="140"/>
        <end position="142"/>
    </location>
</feature>
<feature type="strand" evidence="10">
    <location>
        <begin position="143"/>
        <end position="150"/>
    </location>
</feature>
<feature type="strand" evidence="10">
    <location>
        <begin position="156"/>
        <end position="162"/>
    </location>
</feature>
<feature type="turn" evidence="10">
    <location>
        <begin position="164"/>
        <end position="167"/>
    </location>
</feature>
<feature type="strand" evidence="10">
    <location>
        <begin position="174"/>
        <end position="179"/>
    </location>
</feature>
<feature type="helix" evidence="10">
    <location>
        <begin position="188"/>
        <end position="200"/>
    </location>
</feature>
<feature type="helix" evidence="10">
    <location>
        <begin position="207"/>
        <end position="211"/>
    </location>
</feature>
<feature type="strand" evidence="10">
    <location>
        <begin position="213"/>
        <end position="218"/>
    </location>
</feature>
<feature type="helix" evidence="10">
    <location>
        <begin position="222"/>
        <end position="230"/>
    </location>
</feature>
<feature type="helix" evidence="10">
    <location>
        <begin position="245"/>
        <end position="248"/>
    </location>
</feature>
<feature type="helix" evidence="10">
    <location>
        <begin position="255"/>
        <end position="257"/>
    </location>
</feature>
<feature type="strand" evidence="10">
    <location>
        <begin position="259"/>
        <end position="262"/>
    </location>
</feature>
<feature type="strand" evidence="10">
    <location>
        <begin position="265"/>
        <end position="267"/>
    </location>
</feature>
<feature type="helix" evidence="10">
    <location>
        <begin position="286"/>
        <end position="298"/>
    </location>
</feature>
<feature type="helix" evidence="10">
    <location>
        <begin position="299"/>
        <end position="301"/>
    </location>
</feature>
<feature type="strand" evidence="10">
    <location>
        <begin position="302"/>
        <end position="309"/>
    </location>
</feature>
<feature type="strand" evidence="10">
    <location>
        <begin position="311"/>
        <end position="318"/>
    </location>
</feature>
<feature type="turn" evidence="10">
    <location>
        <begin position="320"/>
        <end position="322"/>
    </location>
</feature>
<feature type="helix" evidence="10">
    <location>
        <begin position="329"/>
        <end position="344"/>
    </location>
</feature>
<feature type="strand" evidence="10">
    <location>
        <begin position="355"/>
        <end position="358"/>
    </location>
</feature>
<feature type="helix" evidence="10">
    <location>
        <begin position="359"/>
        <end position="363"/>
    </location>
</feature>
<feature type="helix" evidence="10">
    <location>
        <begin position="371"/>
        <end position="377"/>
    </location>
</feature>
<feature type="strand" evidence="10">
    <location>
        <begin position="381"/>
        <end position="387"/>
    </location>
</feature>
<feature type="strand" evidence="10">
    <location>
        <begin position="391"/>
        <end position="394"/>
    </location>
</feature>
<feature type="helix" evidence="10">
    <location>
        <begin position="395"/>
        <end position="398"/>
    </location>
</feature>
<feature type="helix" evidence="10">
    <location>
        <begin position="402"/>
        <end position="404"/>
    </location>
</feature>
<feature type="helix" evidence="10">
    <location>
        <begin position="405"/>
        <end position="427"/>
    </location>
</feature>
<name>CBPB_HELZE</name>
<accession>Q3T905</accession>
<organism evidence="8">
    <name type="scientific">Helicoverpa zea</name>
    <name type="common">Corn earworm moth</name>
    <name type="synonym">Heliothis zea</name>
    <dbReference type="NCBI Taxonomy" id="7113"/>
    <lineage>
        <taxon>Eukaryota</taxon>
        <taxon>Metazoa</taxon>
        <taxon>Ecdysozoa</taxon>
        <taxon>Arthropoda</taxon>
        <taxon>Hexapoda</taxon>
        <taxon>Insecta</taxon>
        <taxon>Pterygota</taxon>
        <taxon>Neoptera</taxon>
        <taxon>Endopterygota</taxon>
        <taxon>Lepidoptera</taxon>
        <taxon>Glossata</taxon>
        <taxon>Ditrysia</taxon>
        <taxon>Noctuoidea</taxon>
        <taxon>Noctuidae</taxon>
        <taxon>Heliothinae</taxon>
        <taxon>Helicoverpa</taxon>
    </lineage>
</organism>
<reference evidence="8 9" key="1">
    <citation type="journal article" date="2005" name="Proc. Natl. Acad. Sci. U.S.A.">
        <title>Structural basis of the resistance of an insect carboxypeptidase to plant protease inhibitors.</title>
        <authorList>
            <person name="Bayes A."/>
            <person name="Comellas-Bigler M."/>
            <person name="Rodriguez de la Vega M."/>
            <person name="Maskos K."/>
            <person name="Bode W."/>
            <person name="Aviles F.X."/>
            <person name="Jongsma M.A."/>
            <person name="Beekwilder J."/>
            <person name="Vendrell J."/>
        </authorList>
    </citation>
    <scope>NUCLEOTIDE SEQUENCE [MRNA]</scope>
    <scope>X-RAY CRYSTALLOGRAPHY (2.30 ANGSTROMS) OF 117-428 IN COMPLEX WITH ZINC</scope>
    <scope>FUNCTION</scope>
    <scope>CATALYTIC ACTIVITY</scope>
    <scope>COFACTOR</scope>
    <scope>ACTIVITY REGULATION</scope>
    <scope>BIOPHYSICOCHEMICAL PROPERTIES</scope>
    <scope>DISULFIDE BOND</scope>
    <source>
        <tissue evidence="8">Midgut</tissue>
    </source>
</reference>
<sequence length="429" mass="48393">MKFLLVLALCAVVYAKHEAYIGWKSYYVGVATDAQAKALEPLIQKYELDFLSHPTKSREGVVLVKPQHQAGFVQDIEAGGITYRIHADDVKRQLEFDDQLIEMQRMSSFTRTAGRQLPYDNYQELEVIDEYLDYIGEKYPDVATVVNAAESFEGRPIKYIKISTTNFEDENKPVIFIDGGIHAREWISPPSVTWAIHKLVEDVTENDLLEKFDWILLPVVNPDGYKYTFTNERFWRKTRSTNNNPLSQICRGADGNRNFDFVWNSIGTSNSPCSDIYAGTSAFSEVETRVVRDILHEHLARMALYLTMHSFGSMILYPWGHDGSLSQNALGLHTVGVAMASVIQSNALPNFPPYTVGNSALVIGYYIAGSSEDYAHSIGVPLSYTYELPGLSSGWDGFHLPPQYIEQVCRETWEGIVVGARRAGDLFRK</sequence>
<gene>
    <name evidence="5" type="primary">CPB</name>
</gene>
<evidence type="ECO:0000250" key="1">
    <source>
        <dbReference type="UniProtKB" id="P00730"/>
    </source>
</evidence>
<evidence type="ECO:0000255" key="2"/>
<evidence type="ECO:0000255" key="3">
    <source>
        <dbReference type="PROSITE-ProRule" id="PRU01379"/>
    </source>
</evidence>
<evidence type="ECO:0000269" key="4">
    <source>
    </source>
</evidence>
<evidence type="ECO:0000303" key="5">
    <source>
    </source>
</evidence>
<evidence type="ECO:0000305" key="6"/>
<evidence type="ECO:0000305" key="7">
    <source>
    </source>
</evidence>
<evidence type="ECO:0000312" key="8">
    <source>
        <dbReference type="EMBL" id="CAJ30028.1"/>
    </source>
</evidence>
<evidence type="ECO:0007744" key="9">
    <source>
        <dbReference type="PDB" id="2C1C"/>
    </source>
</evidence>
<evidence type="ECO:0007829" key="10">
    <source>
        <dbReference type="PDB" id="2C1C"/>
    </source>
</evidence>
<proteinExistence type="evidence at protein level"/>
<protein>
    <recommendedName>
        <fullName evidence="5">Carboxypeptidase B</fullName>
        <shortName evidence="5">CPBHz</shortName>
        <ecNumber evidence="4">3.4.17.2</ecNumber>
    </recommendedName>
</protein>
<comment type="function">
    <text evidence="4">Metalloprotease which cleaves a single amino acid from the C-terminal end of polypeptide chains. Shows a strong preference for peptides with a terminal lysine residue.</text>
</comment>
<comment type="catalytic activity">
    <reaction evidence="4">
        <text>Preferential release of a C-terminal lysine or arginine amino acid.</text>
        <dbReference type="EC" id="3.4.17.2"/>
    </reaction>
</comment>
<comment type="cofactor">
    <cofactor evidence="7">
        <name>Zn(2+)</name>
        <dbReference type="ChEBI" id="CHEBI:29105"/>
    </cofactor>
</comment>
<comment type="activity regulation">
    <text evidence="4">Highly resistant to inhibition by potato carboxypeptidase inhibitor (PCI). Moderately inhibited by leech carboxypeptidase inhibitor (LCI) and tick carboxypeptidase inhibitor (TCI).</text>
</comment>
<comment type="biophysicochemical properties">
    <kinetics>
        <KM evidence="4">0.26 mM for benzoyl-glycyl-lysine (Bz-Gly-Lys)</KM>
        <KM evidence="4">0.061 mM for N-(4-furylacryloyl)-Ala-Lys (FAAK)</KM>
        <text evidence="4">kcat is 45.7 sec(-1) for benzoyl-glycyl-lysine (Bz-Gly-Lys). kcat is 15.3 sec(-1) for N-(4-furylacryloyl)-Ala-Lys (FAAK).</text>
    </kinetics>
</comment>
<comment type="subcellular location">
    <subcellularLocation>
        <location evidence="6">Secreted</location>
    </subcellularLocation>
</comment>
<comment type="similarity">
    <text evidence="6">Belongs to the peptidase M14 family.</text>
</comment>